<organism>
    <name type="scientific">Aedes aegypti</name>
    <name type="common">Yellowfever mosquito</name>
    <name type="synonym">Culex aegypti</name>
    <dbReference type="NCBI Taxonomy" id="7159"/>
    <lineage>
        <taxon>Eukaryota</taxon>
        <taxon>Metazoa</taxon>
        <taxon>Ecdysozoa</taxon>
        <taxon>Arthropoda</taxon>
        <taxon>Hexapoda</taxon>
        <taxon>Insecta</taxon>
        <taxon>Pterygota</taxon>
        <taxon>Neoptera</taxon>
        <taxon>Endopterygota</taxon>
        <taxon>Diptera</taxon>
        <taxon>Nematocera</taxon>
        <taxon>Culicoidea</taxon>
        <taxon>Culicidae</taxon>
        <taxon>Culicinae</taxon>
        <taxon>Aedini</taxon>
        <taxon>Aedes</taxon>
        <taxon>Stegomyia</taxon>
    </lineage>
</organism>
<accession>Q16EE5</accession>
<comment type="similarity">
    <text evidence="2">Belongs to the UPF0729 family.</text>
</comment>
<sequence length="97" mass="10695">MVCVPCFIIPVLLFLWHRFIQPYVLRFWNPWEKKDKDGNVIKDGSSTEFPFQCKGGVCPFPVKDKAKQEVAASGSGSNGTATAVGSEGEAEETKKSQ</sequence>
<proteinExistence type="inferred from homology"/>
<name>U729_AEDAE</name>
<feature type="chain" id="PRO_0000365555" description="UPF0729 protein AAEL015238">
    <location>
        <begin position="1"/>
        <end position="97"/>
    </location>
</feature>
<feature type="region of interest" description="Disordered" evidence="1">
    <location>
        <begin position="69"/>
        <end position="97"/>
    </location>
</feature>
<feature type="compositionally biased region" description="Polar residues" evidence="1">
    <location>
        <begin position="74"/>
        <end position="83"/>
    </location>
</feature>
<keyword id="KW-1185">Reference proteome</keyword>
<evidence type="ECO:0000256" key="1">
    <source>
        <dbReference type="SAM" id="MobiDB-lite"/>
    </source>
</evidence>
<evidence type="ECO:0000305" key="2"/>
<protein>
    <recommendedName>
        <fullName>UPF0729 protein AAEL015238</fullName>
    </recommendedName>
</protein>
<gene>
    <name type="ORF">AAEL015238</name>
</gene>
<reference key="1">
    <citation type="journal article" date="2007" name="Science">
        <title>Genome sequence of Aedes aegypti, a major arbovirus vector.</title>
        <authorList>
            <person name="Nene V."/>
            <person name="Wortman J.R."/>
            <person name="Lawson D."/>
            <person name="Haas B.J."/>
            <person name="Kodira C.D."/>
            <person name="Tu Z.J."/>
            <person name="Loftus B.J."/>
            <person name="Xi Z."/>
            <person name="Megy K."/>
            <person name="Grabherr M."/>
            <person name="Ren Q."/>
            <person name="Zdobnov E.M."/>
            <person name="Lobo N.F."/>
            <person name="Campbell K.S."/>
            <person name="Brown S.E."/>
            <person name="Bonaldo M.F."/>
            <person name="Zhu J."/>
            <person name="Sinkins S.P."/>
            <person name="Hogenkamp D.G."/>
            <person name="Amedeo P."/>
            <person name="Arensburger P."/>
            <person name="Atkinson P.W."/>
            <person name="Bidwell S.L."/>
            <person name="Biedler J."/>
            <person name="Birney E."/>
            <person name="Bruggner R.V."/>
            <person name="Costas J."/>
            <person name="Coy M.R."/>
            <person name="Crabtree J."/>
            <person name="Crawford M."/>
            <person name="DeBruyn B."/>
            <person name="DeCaprio D."/>
            <person name="Eiglmeier K."/>
            <person name="Eisenstadt E."/>
            <person name="El-Dorry H."/>
            <person name="Gelbart W.M."/>
            <person name="Gomes S.L."/>
            <person name="Hammond M."/>
            <person name="Hannick L.I."/>
            <person name="Hogan J.R."/>
            <person name="Holmes M.H."/>
            <person name="Jaffe D."/>
            <person name="Johnston S.J."/>
            <person name="Kennedy R.C."/>
            <person name="Koo H."/>
            <person name="Kravitz S."/>
            <person name="Kriventseva E.V."/>
            <person name="Kulp D."/>
            <person name="Labutti K."/>
            <person name="Lee E."/>
            <person name="Li S."/>
            <person name="Lovin D.D."/>
            <person name="Mao C."/>
            <person name="Mauceli E."/>
            <person name="Menck C.F."/>
            <person name="Miller J.R."/>
            <person name="Montgomery P."/>
            <person name="Mori A."/>
            <person name="Nascimento A.L."/>
            <person name="Naveira H.F."/>
            <person name="Nusbaum C."/>
            <person name="O'Leary S.B."/>
            <person name="Orvis J."/>
            <person name="Pertea M."/>
            <person name="Quesneville H."/>
            <person name="Reidenbach K.R."/>
            <person name="Rogers Y.-H.C."/>
            <person name="Roth C.W."/>
            <person name="Schneider J.R."/>
            <person name="Schatz M."/>
            <person name="Shumway M."/>
            <person name="Stanke M."/>
            <person name="Stinson E.O."/>
            <person name="Tubio J.M.C."/>
            <person name="Vanzee J.P."/>
            <person name="Verjovski-Almeida S."/>
            <person name="Werner D."/>
            <person name="White O.R."/>
            <person name="Wyder S."/>
            <person name="Zeng Q."/>
            <person name="Zhao Q."/>
            <person name="Zhao Y."/>
            <person name="Hill C.A."/>
            <person name="Raikhel A.S."/>
            <person name="Soares M.B."/>
            <person name="Knudson D.L."/>
            <person name="Lee N.H."/>
            <person name="Galagan J."/>
            <person name="Salzberg S.L."/>
            <person name="Paulsen I.T."/>
            <person name="Dimopoulos G."/>
            <person name="Collins F.H."/>
            <person name="Bruce B."/>
            <person name="Fraser-Liggett C.M."/>
            <person name="Severson D.W."/>
        </authorList>
    </citation>
    <scope>NUCLEOTIDE SEQUENCE [LARGE SCALE GENOMIC DNA]</scope>
    <source>
        <strain>LVPib12</strain>
    </source>
</reference>
<dbReference type="EMBL" id="CH478814">
    <property type="protein sequence ID" value="EAT32602.1"/>
    <property type="molecule type" value="Genomic_DNA"/>
</dbReference>
<dbReference type="SMR" id="Q16EE5"/>
<dbReference type="FunCoup" id="Q16EE5">
    <property type="interactions" value="36"/>
</dbReference>
<dbReference type="PaxDb" id="7159-AAEL015238-PA"/>
<dbReference type="EnsemblMetazoa" id="AAEL015238-RA">
    <property type="protein sequence ID" value="AAEL015238-PA"/>
    <property type="gene ID" value="AAEL015238"/>
</dbReference>
<dbReference type="GeneID" id="5566751"/>
<dbReference type="KEGG" id="aag:5566751"/>
<dbReference type="VEuPathDB" id="VectorBase:AAEL015238"/>
<dbReference type="eggNOG" id="ENOG502SEY0">
    <property type="taxonomic scope" value="Eukaryota"/>
</dbReference>
<dbReference type="HOGENOM" id="CLU_167079_0_0_1"/>
<dbReference type="InParanoid" id="Q16EE5"/>
<dbReference type="OMA" id="HKFIQPY"/>
<dbReference type="OrthoDB" id="10062823at2759"/>
<dbReference type="PhylomeDB" id="Q16EE5"/>
<dbReference type="Proteomes" id="UP000008820">
    <property type="component" value="Chromosome 1"/>
</dbReference>
<dbReference type="Proteomes" id="UP000682892">
    <property type="component" value="Unassembled WGS sequence"/>
</dbReference>
<dbReference type="InterPro" id="IPR026776">
    <property type="entry name" value="UPF0729_C18orf32-like"/>
</dbReference>
<dbReference type="PANTHER" id="PTHR13456">
    <property type="entry name" value="UPF0729 PROTEIN C18ORF32"/>
    <property type="match status" value="1"/>
</dbReference>
<dbReference type="PANTHER" id="PTHR13456:SF0">
    <property type="entry name" value="UPF0729 PROTEIN C18ORF32"/>
    <property type="match status" value="1"/>
</dbReference>
<dbReference type="Pfam" id="PF14975">
    <property type="entry name" value="DUF4512"/>
    <property type="match status" value="1"/>
</dbReference>